<reference key="1">
    <citation type="submission" date="2005-08" db="EMBL/GenBank/DDBJ databases">
        <authorList>
            <consortium name="NIH - Xenopus Gene Collection (XGC) project"/>
        </authorList>
    </citation>
    <scope>NUCLEOTIDE SEQUENCE [LARGE SCALE MRNA]</scope>
    <source>
        <tissue>Ovary</tissue>
    </source>
</reference>
<sequence>MASSDTTTERKKLADLRVIDLKTELKRRSLDVNGVKNVLMSRLKQAIEEEGGDPDNIELTVNSDTPKKNSKNKGRKVEADESGCEASVEEDSGKDNELESQDVSDQDGNDELKDSEENEEESATFVNVLSTEEENETKQTSHFDNPERGSDIQAEEAEEDEKKDVTGSGDVTQEISKPLHSGDNESELRIKEEMETSTSLKEAEDDNVSVTIQAEDAITLDCDGDDLLETGKNVKIADSETSKPKDEQEASYPKDGLEDQKDLTSENQKDDKEESGKGDAVKKDGREASKKTESGDKDKDSQKKGASSTGASGQAKSSSKDAKESKSASKEDKGSTSSTSGSSTRNLWVSGLSSNTKAADLKNLFGKYGKVLSAKVVTNARSPGAKCYGIVTMSSSADVARCISHLHRTELHGQQISVEKVKNDPSKRDIKKDGDEKLGSGRTSGERKSSGGDKNSKTQSSVKKDDRRSSDKAEKKDGKELKKDSKEKSESATTVPSPESSKKNEERKKPGGKSPGPMVVIDQTKGDQVYGRPPIRRGRFDKMRNREPFFQNKMKFREFRDRKDILTFEKMKQQRIREKVERMERIQRFRRAVEMRRSREMAERECRERERIRIMREREELDRLQRERERLEIERQKLERERMERERLERERIRIEQERRREAERIAREREELRRQQEQLRFEQEKRNSLKRPRDVDHRRDEPFWNENKKMAVDTDSRFSHGSDFNRQQNRFNDFDHRDRNRYSEGSNVSSFERRDRFVSPGEGKKGRPTMENFNKNFTDSRRNEPAQPRNDPRDTDRREVRDQDDRRPVGIERTGGNRNDGASHDRGRLGNPEIQHGRQRDSGNNQARSGTWKGEGGISADKREARGERTDRPTRESTGQPSRGGHASRGGKPGYTSRDGDRSVIVGERGSSGQHFNEGRQVVERHGRDAGGPRKDWHAPSSQGSGYNARRMSDGRSGGMMSSNPAINRVVQMPGGSMQRGSGSGFKSYKGAPQRRY</sequence>
<gene>
    <name type="primary">sltm</name>
</gene>
<accession>Q498L2</accession>
<organism>
    <name type="scientific">Xenopus laevis</name>
    <name type="common">African clawed frog</name>
    <dbReference type="NCBI Taxonomy" id="8355"/>
    <lineage>
        <taxon>Eukaryota</taxon>
        <taxon>Metazoa</taxon>
        <taxon>Chordata</taxon>
        <taxon>Craniata</taxon>
        <taxon>Vertebrata</taxon>
        <taxon>Euteleostomi</taxon>
        <taxon>Amphibia</taxon>
        <taxon>Batrachia</taxon>
        <taxon>Anura</taxon>
        <taxon>Pipoidea</taxon>
        <taxon>Pipidae</taxon>
        <taxon>Xenopodinae</taxon>
        <taxon>Xenopus</taxon>
        <taxon>Xenopus</taxon>
    </lineage>
</organism>
<feature type="chain" id="PRO_0000307800" description="SAFB-like transcription modulator">
    <location>
        <begin position="1"/>
        <end position="998"/>
    </location>
</feature>
<feature type="domain" description="SAP" evidence="4">
    <location>
        <begin position="13"/>
        <end position="47"/>
    </location>
</feature>
<feature type="domain" description="RRM" evidence="3">
    <location>
        <begin position="345"/>
        <end position="423"/>
    </location>
</feature>
<feature type="region of interest" description="Disordered" evidence="5">
    <location>
        <begin position="48"/>
        <end position="208"/>
    </location>
</feature>
<feature type="region of interest" description="Disordered" evidence="5">
    <location>
        <begin position="233"/>
        <end position="348"/>
    </location>
</feature>
<feature type="region of interest" description="Disordered" evidence="5">
    <location>
        <begin position="417"/>
        <end position="546"/>
    </location>
</feature>
<feature type="region of interest" description="Disordered" evidence="5">
    <location>
        <begin position="683"/>
        <end position="998"/>
    </location>
</feature>
<feature type="coiled-coil region" evidence="2">
    <location>
        <begin position="590"/>
        <end position="692"/>
    </location>
</feature>
<feature type="compositionally biased region" description="Acidic residues" evidence="5">
    <location>
        <begin position="80"/>
        <end position="90"/>
    </location>
</feature>
<feature type="compositionally biased region" description="Acidic residues" evidence="5">
    <location>
        <begin position="98"/>
        <end position="122"/>
    </location>
</feature>
<feature type="compositionally biased region" description="Basic and acidic residues" evidence="5">
    <location>
        <begin position="136"/>
        <end position="150"/>
    </location>
</feature>
<feature type="compositionally biased region" description="Basic and acidic residues" evidence="5">
    <location>
        <begin position="180"/>
        <end position="194"/>
    </location>
</feature>
<feature type="compositionally biased region" description="Basic and acidic residues" evidence="5">
    <location>
        <begin position="235"/>
        <end position="248"/>
    </location>
</feature>
<feature type="compositionally biased region" description="Basic and acidic residues" evidence="5">
    <location>
        <begin position="255"/>
        <end position="303"/>
    </location>
</feature>
<feature type="compositionally biased region" description="Basic and acidic residues" evidence="5">
    <location>
        <begin position="318"/>
        <end position="334"/>
    </location>
</feature>
<feature type="compositionally biased region" description="Low complexity" evidence="5">
    <location>
        <begin position="335"/>
        <end position="344"/>
    </location>
</feature>
<feature type="compositionally biased region" description="Basic and acidic residues" evidence="5">
    <location>
        <begin position="419"/>
        <end position="490"/>
    </location>
</feature>
<feature type="compositionally biased region" description="Basic and acidic residues" evidence="5">
    <location>
        <begin position="500"/>
        <end position="509"/>
    </location>
</feature>
<feature type="compositionally biased region" description="Basic and acidic residues" evidence="5">
    <location>
        <begin position="683"/>
        <end position="721"/>
    </location>
</feature>
<feature type="compositionally biased region" description="Basic and acidic residues" evidence="5">
    <location>
        <begin position="733"/>
        <end position="743"/>
    </location>
</feature>
<feature type="compositionally biased region" description="Basic and acidic residues" evidence="5">
    <location>
        <begin position="752"/>
        <end position="766"/>
    </location>
</feature>
<feature type="compositionally biased region" description="Basic and acidic residues" evidence="5">
    <location>
        <begin position="779"/>
        <end position="811"/>
    </location>
</feature>
<feature type="compositionally biased region" description="Basic and acidic residues" evidence="5">
    <location>
        <begin position="861"/>
        <end position="876"/>
    </location>
</feature>
<feature type="compositionally biased region" description="Basic and acidic residues" evidence="5">
    <location>
        <begin position="918"/>
        <end position="939"/>
    </location>
</feature>
<comment type="function">
    <text evidence="1">May act as a general inhibitor of transcription.</text>
</comment>
<comment type="subcellular location">
    <subcellularLocation>
        <location evidence="1">Nucleus</location>
    </subcellularLocation>
</comment>
<name>SLTM_XENLA</name>
<dbReference type="EMBL" id="BC100171">
    <property type="protein sequence ID" value="AAI00172.1"/>
    <property type="molecule type" value="mRNA"/>
</dbReference>
<dbReference type="RefSeq" id="NP_001089646.1">
    <property type="nucleotide sequence ID" value="NM_001096177.1"/>
</dbReference>
<dbReference type="SMR" id="Q498L2"/>
<dbReference type="GeneID" id="734706"/>
<dbReference type="KEGG" id="xla:734706"/>
<dbReference type="AGR" id="Xenbase:XB-GENE-6255300"/>
<dbReference type="CTD" id="734706"/>
<dbReference type="Xenbase" id="XB-GENE-6255300">
    <property type="gene designation" value="sltm.S"/>
</dbReference>
<dbReference type="OrthoDB" id="6159259at2759"/>
<dbReference type="Proteomes" id="UP000186698">
    <property type="component" value="Chromosome 3S"/>
</dbReference>
<dbReference type="Bgee" id="734706">
    <property type="expression patterns" value="Expressed in gastrula and 19 other cell types or tissues"/>
</dbReference>
<dbReference type="GO" id="GO:0005634">
    <property type="term" value="C:nucleus"/>
    <property type="evidence" value="ECO:0000318"/>
    <property type="project" value="GO_Central"/>
</dbReference>
<dbReference type="GO" id="GO:0003723">
    <property type="term" value="F:RNA binding"/>
    <property type="evidence" value="ECO:0007669"/>
    <property type="project" value="UniProtKB-KW"/>
</dbReference>
<dbReference type="GO" id="GO:0043565">
    <property type="term" value="F:sequence-specific DNA binding"/>
    <property type="evidence" value="ECO:0000318"/>
    <property type="project" value="GO_Central"/>
</dbReference>
<dbReference type="GO" id="GO:0050684">
    <property type="term" value="P:regulation of mRNA processing"/>
    <property type="evidence" value="ECO:0000318"/>
    <property type="project" value="GO_Central"/>
</dbReference>
<dbReference type="GO" id="GO:0006357">
    <property type="term" value="P:regulation of transcription by RNA polymerase II"/>
    <property type="evidence" value="ECO:0000318"/>
    <property type="project" value="GO_Central"/>
</dbReference>
<dbReference type="CDD" id="cd12678">
    <property type="entry name" value="RRM_SLTM"/>
    <property type="match status" value="1"/>
</dbReference>
<dbReference type="FunFam" id="1.10.720.30:FF:000010">
    <property type="entry name" value="SAFB-like transcription modulator isoform X2"/>
    <property type="match status" value="1"/>
</dbReference>
<dbReference type="FunFam" id="3.30.70.330:FF:000238">
    <property type="entry name" value="SAFB-like transcription modulator isoform X2"/>
    <property type="match status" value="1"/>
</dbReference>
<dbReference type="Gene3D" id="3.30.70.330">
    <property type="match status" value="1"/>
</dbReference>
<dbReference type="Gene3D" id="1.10.720.30">
    <property type="entry name" value="SAP domain"/>
    <property type="match status" value="1"/>
</dbReference>
<dbReference type="InterPro" id="IPR012677">
    <property type="entry name" value="Nucleotide-bd_a/b_plait_sf"/>
</dbReference>
<dbReference type="InterPro" id="IPR035979">
    <property type="entry name" value="RBD_domain_sf"/>
</dbReference>
<dbReference type="InterPro" id="IPR000504">
    <property type="entry name" value="RRM_dom"/>
</dbReference>
<dbReference type="InterPro" id="IPR051738">
    <property type="entry name" value="SAF_Modulators"/>
</dbReference>
<dbReference type="InterPro" id="IPR003034">
    <property type="entry name" value="SAP_dom"/>
</dbReference>
<dbReference type="InterPro" id="IPR036361">
    <property type="entry name" value="SAP_dom_sf"/>
</dbReference>
<dbReference type="PANTHER" id="PTHR15683:SF5">
    <property type="entry name" value="SAFB-LIKE TRANSCRIPTION MODULATOR"/>
    <property type="match status" value="1"/>
</dbReference>
<dbReference type="PANTHER" id="PTHR15683">
    <property type="entry name" value="SCAFFOLD ATTACHMENT FACTOR B-RELATED"/>
    <property type="match status" value="1"/>
</dbReference>
<dbReference type="Pfam" id="PF00076">
    <property type="entry name" value="RRM_1"/>
    <property type="match status" value="1"/>
</dbReference>
<dbReference type="Pfam" id="PF02037">
    <property type="entry name" value="SAP"/>
    <property type="match status" value="1"/>
</dbReference>
<dbReference type="SMART" id="SM00360">
    <property type="entry name" value="RRM"/>
    <property type="match status" value="1"/>
</dbReference>
<dbReference type="SMART" id="SM00513">
    <property type="entry name" value="SAP"/>
    <property type="match status" value="1"/>
</dbReference>
<dbReference type="SUPFAM" id="SSF54928">
    <property type="entry name" value="RNA-binding domain, RBD"/>
    <property type="match status" value="1"/>
</dbReference>
<dbReference type="SUPFAM" id="SSF68906">
    <property type="entry name" value="SAP domain"/>
    <property type="match status" value="1"/>
</dbReference>
<dbReference type="PROSITE" id="PS50102">
    <property type="entry name" value="RRM"/>
    <property type="match status" value="1"/>
</dbReference>
<dbReference type="PROSITE" id="PS50800">
    <property type="entry name" value="SAP"/>
    <property type="match status" value="1"/>
</dbReference>
<evidence type="ECO:0000250" key="1"/>
<evidence type="ECO:0000255" key="2"/>
<evidence type="ECO:0000255" key="3">
    <source>
        <dbReference type="PROSITE-ProRule" id="PRU00176"/>
    </source>
</evidence>
<evidence type="ECO:0000255" key="4">
    <source>
        <dbReference type="PROSITE-ProRule" id="PRU00186"/>
    </source>
</evidence>
<evidence type="ECO:0000256" key="5">
    <source>
        <dbReference type="SAM" id="MobiDB-lite"/>
    </source>
</evidence>
<protein>
    <recommendedName>
        <fullName>SAFB-like transcription modulator</fullName>
    </recommendedName>
</protein>
<proteinExistence type="evidence at transcript level"/>
<keyword id="KW-0175">Coiled coil</keyword>
<keyword id="KW-0539">Nucleus</keyword>
<keyword id="KW-1185">Reference proteome</keyword>
<keyword id="KW-0678">Repressor</keyword>
<keyword id="KW-0694">RNA-binding</keyword>
<keyword id="KW-0804">Transcription</keyword>
<keyword id="KW-0805">Transcription regulation</keyword>